<feature type="chain" id="PRO_0000063070" description="Putative pterin-4-alpha-carbinolamine dehydratase">
    <location>
        <begin position="1"/>
        <end position="99"/>
    </location>
</feature>
<dbReference type="EC" id="4.2.1.96"/>
<dbReference type="EMBL" id="AE000657">
    <property type="protein sequence ID" value="AAC06420.1"/>
    <property type="molecule type" value="Genomic_DNA"/>
</dbReference>
<dbReference type="PIR" id="C70304">
    <property type="entry name" value="C70304"/>
</dbReference>
<dbReference type="RefSeq" id="NP_213022.1">
    <property type="nucleotide sequence ID" value="NC_000918.1"/>
</dbReference>
<dbReference type="RefSeq" id="WP_010879960.1">
    <property type="nucleotide sequence ID" value="NC_000918.1"/>
</dbReference>
<dbReference type="SMR" id="O66462"/>
<dbReference type="STRING" id="224324.aq_049"/>
<dbReference type="EnsemblBacteria" id="AAC06420">
    <property type="protein sequence ID" value="AAC06420"/>
    <property type="gene ID" value="aq_049"/>
</dbReference>
<dbReference type="KEGG" id="aae:aq_049"/>
<dbReference type="eggNOG" id="COG2154">
    <property type="taxonomic scope" value="Bacteria"/>
</dbReference>
<dbReference type="HOGENOM" id="CLU_081974_4_0_0"/>
<dbReference type="InParanoid" id="O66462"/>
<dbReference type="OrthoDB" id="9800108at2"/>
<dbReference type="Proteomes" id="UP000000798">
    <property type="component" value="Chromosome"/>
</dbReference>
<dbReference type="GO" id="GO:0008124">
    <property type="term" value="F:4-alpha-hydroxytetrahydrobiopterin dehydratase activity"/>
    <property type="evidence" value="ECO:0000318"/>
    <property type="project" value="GO_Central"/>
</dbReference>
<dbReference type="GO" id="GO:0006729">
    <property type="term" value="P:tetrahydrobiopterin biosynthetic process"/>
    <property type="evidence" value="ECO:0007669"/>
    <property type="project" value="InterPro"/>
</dbReference>
<dbReference type="CDD" id="cd00488">
    <property type="entry name" value="PCD_DCoH"/>
    <property type="match status" value="1"/>
</dbReference>
<dbReference type="Gene3D" id="3.30.1360.20">
    <property type="entry name" value="Transcriptional coactivator/pterin dehydratase"/>
    <property type="match status" value="1"/>
</dbReference>
<dbReference type="HAMAP" id="MF_00434">
    <property type="entry name" value="Pterin_4_alpha"/>
    <property type="match status" value="1"/>
</dbReference>
<dbReference type="InterPro" id="IPR036428">
    <property type="entry name" value="PCD_sf"/>
</dbReference>
<dbReference type="InterPro" id="IPR001533">
    <property type="entry name" value="Pterin_deHydtase"/>
</dbReference>
<dbReference type="NCBIfam" id="NF002017">
    <property type="entry name" value="PRK00823.1-2"/>
    <property type="match status" value="1"/>
</dbReference>
<dbReference type="PANTHER" id="PTHR12599">
    <property type="entry name" value="PTERIN-4-ALPHA-CARBINOLAMINE DEHYDRATASE"/>
    <property type="match status" value="1"/>
</dbReference>
<dbReference type="PANTHER" id="PTHR12599:SF0">
    <property type="entry name" value="PTERIN-4-ALPHA-CARBINOLAMINE DEHYDRATASE"/>
    <property type="match status" value="1"/>
</dbReference>
<dbReference type="Pfam" id="PF01329">
    <property type="entry name" value="Pterin_4a"/>
    <property type="match status" value="1"/>
</dbReference>
<dbReference type="SUPFAM" id="SSF55248">
    <property type="entry name" value="PCD-like"/>
    <property type="match status" value="1"/>
</dbReference>
<name>PHS_AQUAE</name>
<protein>
    <recommendedName>
        <fullName>Putative pterin-4-alpha-carbinolamine dehydratase</fullName>
        <shortName>PHS</shortName>
        <ecNumber>4.2.1.96</ecNumber>
    </recommendedName>
    <alternativeName>
        <fullName>4-alpha-hydroxy-tetrahydropterin dehydratase</fullName>
    </alternativeName>
    <alternativeName>
        <fullName>Pterin carbinolamine dehydratase</fullName>
        <shortName>PCD</shortName>
    </alternativeName>
</protein>
<evidence type="ECO:0000305" key="1"/>
<reference key="1">
    <citation type="journal article" date="1998" name="Nature">
        <title>The complete genome of the hyperthermophilic bacterium Aquifex aeolicus.</title>
        <authorList>
            <person name="Deckert G."/>
            <person name="Warren P.V."/>
            <person name="Gaasterland T."/>
            <person name="Young W.G."/>
            <person name="Lenox A.L."/>
            <person name="Graham D.E."/>
            <person name="Overbeek R."/>
            <person name="Snead M.A."/>
            <person name="Keller M."/>
            <person name="Aujay M."/>
            <person name="Huber R."/>
            <person name="Feldman R.A."/>
            <person name="Short J.M."/>
            <person name="Olsen G.J."/>
            <person name="Swanson R.V."/>
        </authorList>
    </citation>
    <scope>NUCLEOTIDE SEQUENCE [LARGE SCALE GENOMIC DNA]</scope>
    <source>
        <strain>VF5</strain>
    </source>
</reference>
<sequence>MVRKLSEEEVKRELENLEGWEFCKDYIQKEFSTKNWKTTIFVVNAIASLAEAQWHHPDLEVSFKKVKVKLTTHEAGGITERDIKLAKSIDELVKEILKH</sequence>
<comment type="catalytic activity">
    <reaction>
        <text>(4aS,6R)-4a-hydroxy-L-erythro-5,6,7,8-tetrahydrobiopterin = (6R)-L-erythro-6,7-dihydrobiopterin + H2O</text>
        <dbReference type="Rhea" id="RHEA:11920"/>
        <dbReference type="ChEBI" id="CHEBI:15377"/>
        <dbReference type="ChEBI" id="CHEBI:15642"/>
        <dbReference type="ChEBI" id="CHEBI:43120"/>
        <dbReference type="EC" id="4.2.1.96"/>
    </reaction>
</comment>
<comment type="similarity">
    <text evidence="1">Belongs to the pterin-4-alpha-carbinolamine dehydratase family.</text>
</comment>
<proteinExistence type="inferred from homology"/>
<keyword id="KW-0456">Lyase</keyword>
<keyword id="KW-1185">Reference proteome</keyword>
<gene>
    <name type="ordered locus">aq_049</name>
</gene>
<organism>
    <name type="scientific">Aquifex aeolicus (strain VF5)</name>
    <dbReference type="NCBI Taxonomy" id="224324"/>
    <lineage>
        <taxon>Bacteria</taxon>
        <taxon>Pseudomonadati</taxon>
        <taxon>Aquificota</taxon>
        <taxon>Aquificia</taxon>
        <taxon>Aquificales</taxon>
        <taxon>Aquificaceae</taxon>
        <taxon>Aquifex</taxon>
    </lineage>
</organism>
<accession>O66462</accession>